<protein>
    <recommendedName>
        <fullName evidence="1">HTH-type transcriptional regulator MntR</fullName>
    </recommendedName>
    <alternativeName>
        <fullName evidence="1">Manganese transport regulator</fullName>
    </alternativeName>
</protein>
<evidence type="ECO:0000255" key="1">
    <source>
        <dbReference type="HAMAP-Rule" id="MF_00732"/>
    </source>
</evidence>
<proteinExistence type="inferred from homology"/>
<comment type="function">
    <text evidence="1">Central regulator of manganese homeostasis.</text>
</comment>
<comment type="activity regulation">
    <text evidence="1">DNA binding is strongly activated by Mn(2+).</text>
</comment>
<comment type="subunit">
    <text evidence="1">Homodimer.</text>
</comment>
<comment type="subcellular location">
    <subcellularLocation>
        <location evidence="1">Cytoplasm</location>
    </subcellularLocation>
</comment>
<comment type="similarity">
    <text evidence="1">Belongs to the DtxR/MntR family.</text>
</comment>
<gene>
    <name evidence="1" type="primary">mntR</name>
    <name type="ordered locus">GK2416</name>
</gene>
<accession>Q5KX85</accession>
<organism>
    <name type="scientific">Geobacillus kaustophilus (strain HTA426)</name>
    <dbReference type="NCBI Taxonomy" id="235909"/>
    <lineage>
        <taxon>Bacteria</taxon>
        <taxon>Bacillati</taxon>
        <taxon>Bacillota</taxon>
        <taxon>Bacilli</taxon>
        <taxon>Bacillales</taxon>
        <taxon>Anoxybacillaceae</taxon>
        <taxon>Geobacillus</taxon>
        <taxon>Geobacillus thermoleovorans group</taxon>
    </lineage>
</organism>
<name>MNTR_GEOKA</name>
<feature type="chain" id="PRO_0000285043" description="HTH-type transcriptional regulator MntR">
    <location>
        <begin position="1"/>
        <end position="141"/>
    </location>
</feature>
<feature type="domain" description="HTH dtxR-type" evidence="1">
    <location>
        <begin position="1"/>
        <end position="63"/>
    </location>
</feature>
<feature type="binding site" evidence="1">
    <location>
        <position position="8"/>
    </location>
    <ligand>
        <name>Mn(2+)</name>
        <dbReference type="ChEBI" id="CHEBI:29035"/>
        <label>1</label>
    </ligand>
</feature>
<feature type="binding site" evidence="1">
    <location>
        <position position="11"/>
    </location>
    <ligand>
        <name>Mn(2+)</name>
        <dbReference type="ChEBI" id="CHEBI:29035"/>
        <label>2</label>
    </ligand>
</feature>
<feature type="binding site" evidence="1">
    <location>
        <position position="77"/>
    </location>
    <ligand>
        <name>Mn(2+)</name>
        <dbReference type="ChEBI" id="CHEBI:29035"/>
        <label>2</label>
    </ligand>
</feature>
<feature type="binding site" evidence="1">
    <location>
        <position position="99"/>
    </location>
    <ligand>
        <name>Mn(2+)</name>
        <dbReference type="ChEBI" id="CHEBI:29035"/>
        <label>1</label>
    </ligand>
</feature>
<feature type="binding site" evidence="1">
    <location>
        <position position="99"/>
    </location>
    <ligand>
        <name>Mn(2+)</name>
        <dbReference type="ChEBI" id="CHEBI:29035"/>
        <label>2</label>
    </ligand>
</feature>
<feature type="binding site" evidence="1">
    <location>
        <position position="102"/>
    </location>
    <ligand>
        <name>Mn(2+)</name>
        <dbReference type="ChEBI" id="CHEBI:29035"/>
        <label>1</label>
    </ligand>
</feature>
<feature type="binding site" evidence="1">
    <location>
        <position position="102"/>
    </location>
    <ligand>
        <name>Mn(2+)</name>
        <dbReference type="ChEBI" id="CHEBI:29035"/>
        <label>2</label>
    </ligand>
</feature>
<feature type="binding site" evidence="1">
    <location>
        <position position="103"/>
    </location>
    <ligand>
        <name>Mn(2+)</name>
        <dbReference type="ChEBI" id="CHEBI:29035"/>
        <label>1</label>
    </ligand>
</feature>
<sequence>MPTPSMEDYIEQIYILIEEKGYARVSDIAEALSVHPSSVTKMVQKLDKDEYLVYEKYRGLVLTPKGRKIGQRLVYRHELLEQFLRLIGVSEENIYRDVEGIEHHLSWNAIDRIGDLVQYFQEDERRLEALRDVQKRNEQGE</sequence>
<dbReference type="EMBL" id="BA000043">
    <property type="protein sequence ID" value="BAD76701.1"/>
    <property type="molecule type" value="Genomic_DNA"/>
</dbReference>
<dbReference type="RefSeq" id="WP_011231898.1">
    <property type="nucleotide sequence ID" value="NC_006510.1"/>
</dbReference>
<dbReference type="SMR" id="Q5KX85"/>
<dbReference type="STRING" id="235909.GK2416"/>
<dbReference type="GeneID" id="32064301"/>
<dbReference type="KEGG" id="gka:GK2416"/>
<dbReference type="eggNOG" id="COG1321">
    <property type="taxonomic scope" value="Bacteria"/>
</dbReference>
<dbReference type="HOGENOM" id="CLU_069532_3_0_9"/>
<dbReference type="Proteomes" id="UP000001172">
    <property type="component" value="Chromosome"/>
</dbReference>
<dbReference type="GO" id="GO:0005737">
    <property type="term" value="C:cytoplasm"/>
    <property type="evidence" value="ECO:0007669"/>
    <property type="project" value="UniProtKB-SubCell"/>
</dbReference>
<dbReference type="GO" id="GO:0003677">
    <property type="term" value="F:DNA binding"/>
    <property type="evidence" value="ECO:0007669"/>
    <property type="project" value="UniProtKB-KW"/>
</dbReference>
<dbReference type="GO" id="GO:0003700">
    <property type="term" value="F:DNA-binding transcription factor activity"/>
    <property type="evidence" value="ECO:0007669"/>
    <property type="project" value="UniProtKB-UniRule"/>
</dbReference>
<dbReference type="GO" id="GO:0030145">
    <property type="term" value="F:manganese ion binding"/>
    <property type="evidence" value="ECO:0007669"/>
    <property type="project" value="UniProtKB-UniRule"/>
</dbReference>
<dbReference type="GO" id="GO:0046983">
    <property type="term" value="F:protein dimerization activity"/>
    <property type="evidence" value="ECO:0007669"/>
    <property type="project" value="InterPro"/>
</dbReference>
<dbReference type="GO" id="GO:0030026">
    <property type="term" value="P:intracellular manganese ion homeostasis"/>
    <property type="evidence" value="ECO:0007669"/>
    <property type="project" value="UniProtKB-UniRule"/>
</dbReference>
<dbReference type="FunFam" id="1.10.10.10:FF:000189">
    <property type="entry name" value="HTH-type transcriptional regulator MntR"/>
    <property type="match status" value="1"/>
</dbReference>
<dbReference type="Gene3D" id="1.10.60.10">
    <property type="entry name" value="Iron dependent repressor, metal binding and dimerisation domain"/>
    <property type="match status" value="1"/>
</dbReference>
<dbReference type="Gene3D" id="1.10.10.10">
    <property type="entry name" value="Winged helix-like DNA-binding domain superfamily/Winged helix DNA-binding domain"/>
    <property type="match status" value="1"/>
</dbReference>
<dbReference type="HAMAP" id="MF_00732">
    <property type="entry name" value="HTH_MntR"/>
    <property type="match status" value="1"/>
</dbReference>
<dbReference type="InterPro" id="IPR050536">
    <property type="entry name" value="DtxR_MntR_Metal-Reg"/>
</dbReference>
<dbReference type="InterPro" id="IPR001367">
    <property type="entry name" value="Fe_dep_repressor"/>
</dbReference>
<dbReference type="InterPro" id="IPR036421">
    <property type="entry name" value="Fe_dep_repressor_sf"/>
</dbReference>
<dbReference type="InterPro" id="IPR022687">
    <property type="entry name" value="HTH_DTXR"/>
</dbReference>
<dbReference type="InterPro" id="IPR022897">
    <property type="entry name" value="HTH_tscrpt_reg_MntR"/>
</dbReference>
<dbReference type="InterPro" id="IPR022689">
    <property type="entry name" value="Iron_dep_repressor"/>
</dbReference>
<dbReference type="InterPro" id="IPR036388">
    <property type="entry name" value="WH-like_DNA-bd_sf"/>
</dbReference>
<dbReference type="InterPro" id="IPR036390">
    <property type="entry name" value="WH_DNA-bd_sf"/>
</dbReference>
<dbReference type="NCBIfam" id="NF003025">
    <property type="entry name" value="PRK03902.1"/>
    <property type="match status" value="1"/>
</dbReference>
<dbReference type="PANTHER" id="PTHR33238">
    <property type="entry name" value="IRON (METAL) DEPENDENT REPRESSOR, DTXR FAMILY"/>
    <property type="match status" value="1"/>
</dbReference>
<dbReference type="PANTHER" id="PTHR33238:SF11">
    <property type="entry name" value="TRANSCRIPTIONAL REGULATOR MNTR"/>
    <property type="match status" value="1"/>
</dbReference>
<dbReference type="Pfam" id="PF02742">
    <property type="entry name" value="Fe_dep_repr_C"/>
    <property type="match status" value="1"/>
</dbReference>
<dbReference type="Pfam" id="PF01325">
    <property type="entry name" value="Fe_dep_repress"/>
    <property type="match status" value="1"/>
</dbReference>
<dbReference type="SMART" id="SM00529">
    <property type="entry name" value="HTH_DTXR"/>
    <property type="match status" value="1"/>
</dbReference>
<dbReference type="SUPFAM" id="SSF47979">
    <property type="entry name" value="Iron-dependent repressor protein, dimerization domain"/>
    <property type="match status" value="1"/>
</dbReference>
<dbReference type="SUPFAM" id="SSF46785">
    <property type="entry name" value="Winged helix' DNA-binding domain"/>
    <property type="match status" value="1"/>
</dbReference>
<dbReference type="PROSITE" id="PS50944">
    <property type="entry name" value="HTH_DTXR"/>
    <property type="match status" value="1"/>
</dbReference>
<reference key="1">
    <citation type="journal article" date="2004" name="Nucleic Acids Res.">
        <title>Thermoadaptation trait revealed by the genome sequence of thermophilic Geobacillus kaustophilus.</title>
        <authorList>
            <person name="Takami H."/>
            <person name="Takaki Y."/>
            <person name="Chee G.-J."/>
            <person name="Nishi S."/>
            <person name="Shimamura S."/>
            <person name="Suzuki H."/>
            <person name="Matsui S."/>
            <person name="Uchiyama I."/>
        </authorList>
    </citation>
    <scope>NUCLEOTIDE SEQUENCE [LARGE SCALE GENOMIC DNA]</scope>
    <source>
        <strain>HTA426</strain>
    </source>
</reference>
<keyword id="KW-0010">Activator</keyword>
<keyword id="KW-0963">Cytoplasm</keyword>
<keyword id="KW-0238">DNA-binding</keyword>
<keyword id="KW-0464">Manganese</keyword>
<keyword id="KW-0479">Metal-binding</keyword>
<keyword id="KW-1185">Reference proteome</keyword>
<keyword id="KW-0678">Repressor</keyword>
<keyword id="KW-0804">Transcription</keyword>
<keyword id="KW-0805">Transcription regulation</keyword>